<name>D14_BPT5</name>
<accession>O48499</accession>
<accession>Q66LT6</accession>
<feature type="chain" id="PRO_0000165216" description="Protein D14">
    <location>
        <begin position="1"/>
        <end position="160"/>
    </location>
</feature>
<protein>
    <recommendedName>
        <fullName>Protein D14</fullName>
    </recommendedName>
</protein>
<dbReference type="EMBL" id="AY543070">
    <property type="protein sequence ID" value="AAS77175.1"/>
    <property type="molecule type" value="Genomic_DNA"/>
</dbReference>
<dbReference type="EMBL" id="AY692264">
    <property type="protein sequence ID" value="AAU05266.1"/>
    <property type="molecule type" value="Genomic_DNA"/>
</dbReference>
<dbReference type="EMBL" id="AY587007">
    <property type="protein sequence ID" value="AAX12057.1"/>
    <property type="molecule type" value="Genomic_DNA"/>
</dbReference>
<dbReference type="RefSeq" id="YP_006957.1">
    <property type="nucleotide sequence ID" value="NC_005859.1"/>
</dbReference>
<dbReference type="GeneID" id="2777610"/>
<dbReference type="KEGG" id="vg:2777610"/>
<dbReference type="Proteomes" id="UP000002107">
    <property type="component" value="Genome"/>
</dbReference>
<dbReference type="Proteomes" id="UP000002141">
    <property type="component" value="Segment"/>
</dbReference>
<dbReference type="Proteomes" id="UP000002503">
    <property type="component" value="Segment"/>
</dbReference>
<dbReference type="GO" id="GO:0003676">
    <property type="term" value="F:nucleic acid binding"/>
    <property type="evidence" value="ECO:0007669"/>
    <property type="project" value="InterPro"/>
</dbReference>
<dbReference type="Gene3D" id="3.40.1350.10">
    <property type="match status" value="1"/>
</dbReference>
<dbReference type="InterPro" id="IPR056931">
    <property type="entry name" value="D14-like"/>
</dbReference>
<dbReference type="InterPro" id="IPR011856">
    <property type="entry name" value="tRNA_endonuc-like_dom_sf"/>
</dbReference>
<dbReference type="Pfam" id="PF24608">
    <property type="entry name" value="PDDEXK_15"/>
    <property type="match status" value="1"/>
</dbReference>
<gene>
    <name type="primary">D14</name>
    <name evidence="2" type="ORF">T5.129</name>
    <name evidence="3" type="ORF">T5p127</name>
</gene>
<evidence type="ECO:0000269" key="1">
    <source>
    </source>
</evidence>
<evidence type="ECO:0000312" key="2">
    <source>
        <dbReference type="EMBL" id="AAS77175.1"/>
    </source>
</evidence>
<evidence type="ECO:0000312" key="3">
    <source>
        <dbReference type="EMBL" id="AAU05266.1"/>
    </source>
</evidence>
<evidence type="ECO:0000312" key="4">
    <source>
        <dbReference type="EMBL" id="AAX12057.1"/>
    </source>
</evidence>
<reference key="1">
    <citation type="journal article" date="1988" name="Nucleic Acids Res.">
        <title>The nucleotide sequence of the region of bacteriophage T5 early genes D10-D15.</title>
        <authorList>
            <person name="Kaliman A.V."/>
            <person name="Kryukov V.M."/>
            <person name="Bayev A.A."/>
        </authorList>
    </citation>
    <scope>NUCLEOTIDE SEQUENCE [GENOMIC DNA]</scope>
    <scope>INDUCTION</scope>
</reference>
<reference key="2">
    <citation type="submission" date="2004-01" db="EMBL/GenBank/DDBJ databases">
        <title>Bacteriophage T5 complete genome.</title>
        <authorList>
            <person name="Ksenzenko V.N."/>
            <person name="Kaliman A.V."/>
            <person name="Krutilina A.I."/>
            <person name="Shlyapnikov M.G."/>
        </authorList>
    </citation>
    <scope>NUCLEOTIDE SEQUENCE [LARGE SCALE GENOMIC DNA]</scope>
</reference>
<reference key="3">
    <citation type="journal article" date="2014" name="J. Virol.">
        <title>Insights into bacteriophage T5 structure from analysis of its morphogenesis genes and protein components.</title>
        <authorList>
            <person name="Zivanovic Y."/>
            <person name="Confalonieri F."/>
            <person name="Ponchon L."/>
            <person name="Lurz R."/>
            <person name="Chami M."/>
            <person name="Flayhan A."/>
            <person name="Renouard M."/>
            <person name="Huet A."/>
            <person name="Decottignies P."/>
            <person name="Davidson A.R."/>
            <person name="Breyton C."/>
            <person name="Boulanger P."/>
        </authorList>
    </citation>
    <scope>NUCLEOTIDE SEQUENCE [LARGE SCALE GENOMIC DNA]</scope>
    <source>
        <strain>St0 deletion mutant</strain>
    </source>
</reference>
<reference key="4">
    <citation type="journal article" date="2005" name="Virology">
        <title>Complete genome sequence of bacteriophage T5.</title>
        <authorList>
            <person name="Wang J."/>
            <person name="Jiang Y."/>
            <person name="Vincent M."/>
            <person name="Sun Y."/>
            <person name="Yu H."/>
            <person name="Wang J."/>
            <person name="Bao Q."/>
            <person name="Kong H."/>
            <person name="Hu S."/>
        </authorList>
    </citation>
    <scope>NUCLEOTIDE SEQUENCE [LARGE SCALE GENOMIC DNA]</scope>
    <source>
        <strain evidence="4">ATCC 11303-B5</strain>
    </source>
</reference>
<comment type="induction">
    <text evidence="1">Expressed in the early phase of the viral replicative cycle.</text>
</comment>
<organism>
    <name type="scientific">Escherichia phage T5</name>
    <name type="common">Enterobacteria phage T5</name>
    <dbReference type="NCBI Taxonomy" id="2695836"/>
    <lineage>
        <taxon>Viruses</taxon>
        <taxon>Duplodnaviria</taxon>
        <taxon>Heunggongvirae</taxon>
        <taxon>Uroviricota</taxon>
        <taxon>Caudoviricetes</taxon>
        <taxon>Demerecviridae</taxon>
        <taxon>Markadamsvirinae</taxon>
        <taxon>Tequintavirus</taxon>
        <taxon>Tequintavirus T5</taxon>
    </lineage>
</organism>
<organismHost>
    <name type="scientific">Escherichia coli</name>
    <dbReference type="NCBI Taxonomy" id="562"/>
</organismHost>
<proteinExistence type="evidence at transcript level"/>
<sequence>MAVDSREKGKRGEYQVRDILRERTGLEWERVPGSGAFGQSHGLKGDIYLPPQSGHISKYCFEVKWYKDDNISSNLFNVGESTLEKWWQQCSREGEQMNSKPALIFKKDRGQWLIALDSSDPMVDNLMSRTHMVLNKKDMEIVIGLFEPWLHHASVEDLIK</sequence>
<keyword id="KW-0244">Early protein</keyword>
<keyword id="KW-1185">Reference proteome</keyword>